<protein>
    <recommendedName>
        <fullName>Probable 2-phosphosulfolactate phosphatase</fullName>
        <ecNumber>3.1.3.71</ecNumber>
    </recommendedName>
</protein>
<name>COMB_THEAC</name>
<dbReference type="EC" id="3.1.3.71"/>
<dbReference type="EMBL" id="AL445067">
    <property type="protein sequence ID" value="CAC12552.1"/>
    <property type="molecule type" value="Genomic_DNA"/>
</dbReference>
<dbReference type="RefSeq" id="WP_010901835.1">
    <property type="nucleotide sequence ID" value="NC_002578.1"/>
</dbReference>
<dbReference type="SMR" id="Q9HIA9"/>
<dbReference type="STRING" id="273075.gene:9572661"/>
<dbReference type="PaxDb" id="273075-Ta1432"/>
<dbReference type="EnsemblBacteria" id="CAC12552">
    <property type="protein sequence ID" value="CAC12552"/>
    <property type="gene ID" value="CAC12552"/>
</dbReference>
<dbReference type="KEGG" id="tac:Ta1432"/>
<dbReference type="eggNOG" id="arCOG04871">
    <property type="taxonomic scope" value="Archaea"/>
</dbReference>
<dbReference type="HOGENOM" id="CLU_070028_0_0_2"/>
<dbReference type="InParanoid" id="Q9HIA9"/>
<dbReference type="OrthoDB" id="146693at2157"/>
<dbReference type="Proteomes" id="UP000001024">
    <property type="component" value="Chromosome"/>
</dbReference>
<dbReference type="GO" id="GO:0050532">
    <property type="term" value="F:2-phosphosulfolactate phosphatase activity"/>
    <property type="evidence" value="ECO:0007669"/>
    <property type="project" value="UniProtKB-UniRule"/>
</dbReference>
<dbReference type="GO" id="GO:0000287">
    <property type="term" value="F:magnesium ion binding"/>
    <property type="evidence" value="ECO:0007669"/>
    <property type="project" value="UniProtKB-UniRule"/>
</dbReference>
<dbReference type="GO" id="GO:0050545">
    <property type="term" value="F:sulfopyruvate decarboxylase activity"/>
    <property type="evidence" value="ECO:0007669"/>
    <property type="project" value="TreeGrafter"/>
</dbReference>
<dbReference type="Gene3D" id="3.90.1560.10">
    <property type="entry name" value="ComB-like"/>
    <property type="match status" value="1"/>
</dbReference>
<dbReference type="HAMAP" id="MF_00490">
    <property type="entry name" value="ComB"/>
    <property type="match status" value="1"/>
</dbReference>
<dbReference type="InterPro" id="IPR005238">
    <property type="entry name" value="ComB-like"/>
</dbReference>
<dbReference type="InterPro" id="IPR036702">
    <property type="entry name" value="ComB-like_sf"/>
</dbReference>
<dbReference type="NCBIfam" id="NF002057">
    <property type="entry name" value="PRK00886.1-6"/>
    <property type="match status" value="1"/>
</dbReference>
<dbReference type="PANTHER" id="PTHR37311">
    <property type="entry name" value="2-PHOSPHOSULFOLACTATE PHOSPHATASE-RELATED"/>
    <property type="match status" value="1"/>
</dbReference>
<dbReference type="PANTHER" id="PTHR37311:SF1">
    <property type="entry name" value="2-PHOSPHOSULFOLACTATE PHOSPHATASE-RELATED"/>
    <property type="match status" value="1"/>
</dbReference>
<dbReference type="Pfam" id="PF04029">
    <property type="entry name" value="2-ph_phosp"/>
    <property type="match status" value="1"/>
</dbReference>
<dbReference type="SUPFAM" id="SSF142823">
    <property type="entry name" value="ComB-like"/>
    <property type="match status" value="1"/>
</dbReference>
<evidence type="ECO:0000250" key="1"/>
<evidence type="ECO:0000305" key="2"/>
<reference key="1">
    <citation type="journal article" date="2000" name="Nature">
        <title>The genome sequence of the thermoacidophilic scavenger Thermoplasma acidophilum.</title>
        <authorList>
            <person name="Ruepp A."/>
            <person name="Graml W."/>
            <person name="Santos-Martinez M.-L."/>
            <person name="Koretke K.K."/>
            <person name="Volker C."/>
            <person name="Mewes H.-W."/>
            <person name="Frishman D."/>
            <person name="Stocker S."/>
            <person name="Lupas A.N."/>
            <person name="Baumeister W."/>
        </authorList>
    </citation>
    <scope>NUCLEOTIDE SEQUENCE [LARGE SCALE GENOMIC DNA]</scope>
    <source>
        <strain>ATCC 25905 / DSM 1728 / JCM 9062 / NBRC 15155 / AMRC-C165</strain>
    </source>
</reference>
<organism>
    <name type="scientific">Thermoplasma acidophilum (strain ATCC 25905 / DSM 1728 / JCM 9062 / NBRC 15155 / AMRC-C165)</name>
    <dbReference type="NCBI Taxonomy" id="273075"/>
    <lineage>
        <taxon>Archaea</taxon>
        <taxon>Methanobacteriati</taxon>
        <taxon>Thermoplasmatota</taxon>
        <taxon>Thermoplasmata</taxon>
        <taxon>Thermoplasmatales</taxon>
        <taxon>Thermoplasmataceae</taxon>
        <taxon>Thermoplasma</taxon>
    </lineage>
</organism>
<proteinExistence type="inferred from homology"/>
<feature type="chain" id="PRO_0000081461" description="Probable 2-phosphosulfolactate phosphatase">
    <location>
        <begin position="1"/>
        <end position="220"/>
    </location>
</feature>
<accession>Q9HIA9</accession>
<gene>
    <name type="primary">comB</name>
    <name type="ordered locus">Ta1432</name>
</gene>
<keyword id="KW-0378">Hydrolase</keyword>
<keyword id="KW-0460">Magnesium</keyword>
<keyword id="KW-1185">Reference proteome</keyword>
<comment type="catalytic activity">
    <reaction>
        <text>(2R)-O-phospho-3-sulfolactate + H2O = (2R)-3-sulfolactate + phosphate</text>
        <dbReference type="Rhea" id="RHEA:23416"/>
        <dbReference type="ChEBI" id="CHEBI:15377"/>
        <dbReference type="ChEBI" id="CHEBI:15597"/>
        <dbReference type="ChEBI" id="CHEBI:43474"/>
        <dbReference type="ChEBI" id="CHEBI:58738"/>
        <dbReference type="EC" id="3.1.3.71"/>
    </reaction>
</comment>
<comment type="cofactor">
    <cofactor evidence="1">
        <name>Mg(2+)</name>
        <dbReference type="ChEBI" id="CHEBI:18420"/>
    </cofactor>
</comment>
<comment type="similarity">
    <text evidence="2">Belongs to the ComB family.</text>
</comment>
<sequence>MIRIGDGRKSDSWAEINVVVDIFRSTTTIPMILFRGAKYILPFRDVRKAIEFKRRNPGTILVGEKYGIKPPYFDYDNSPAEIAEADLSGKVVAFTSTNGTYVLSRIRSGRIIFSSYVNLSATVAMIRSQRDVLILPSNRPIGKAPEDILFANLLKLMAEGHEVDVSEYTRKTEEINRNIIAGVGERDLEFCLRVDHTNIVPEYIDGRIVQSPDSVALTDA</sequence>